<feature type="chain" id="PRO_0000262002" description="UPF0246 protein BURPS1710b_1467">
    <location>
        <begin position="1"/>
        <end position="260"/>
    </location>
</feature>
<accession>Q3JU77</accession>
<proteinExistence type="inferred from homology"/>
<reference key="1">
    <citation type="journal article" date="2010" name="Genome Biol. Evol.">
        <title>Continuing evolution of Burkholderia mallei through genome reduction and large-scale rearrangements.</title>
        <authorList>
            <person name="Losada L."/>
            <person name="Ronning C.M."/>
            <person name="DeShazer D."/>
            <person name="Woods D."/>
            <person name="Fedorova N."/>
            <person name="Kim H.S."/>
            <person name="Shabalina S.A."/>
            <person name="Pearson T.R."/>
            <person name="Brinkac L."/>
            <person name="Tan P."/>
            <person name="Nandi T."/>
            <person name="Crabtree J."/>
            <person name="Badger J."/>
            <person name="Beckstrom-Sternberg S."/>
            <person name="Saqib M."/>
            <person name="Schutzer S.E."/>
            <person name="Keim P."/>
            <person name="Nierman W.C."/>
        </authorList>
    </citation>
    <scope>NUCLEOTIDE SEQUENCE [LARGE SCALE GENOMIC DNA]</scope>
    <source>
        <strain>1710b</strain>
    </source>
</reference>
<name>Y1467_BURP1</name>
<sequence length="260" mass="29184">MIIVLSPAKSLDYETPPHVSHHTQPQFADDAAALIDELRRLSPQQIATLMSISDPLARLNFQRYADWSRASTPANAKQAVLAFNGDVYEGLDARSLSPDDLDYAQRHVRVLSGLYGLLRPLDLLQPYRLEMGTRFSNARGKDLYAFWGERITHALNAELKTRVGASRVLVNCASAEYFKSVKPKLLDARVVTPVFEDWKDGRYKIISFHAKRARGLMARYVVEGRIDSPDALKDFASEGYAFDASASNDDTYVFRRRAGA</sequence>
<organism>
    <name type="scientific">Burkholderia pseudomallei (strain 1710b)</name>
    <dbReference type="NCBI Taxonomy" id="320372"/>
    <lineage>
        <taxon>Bacteria</taxon>
        <taxon>Pseudomonadati</taxon>
        <taxon>Pseudomonadota</taxon>
        <taxon>Betaproteobacteria</taxon>
        <taxon>Burkholderiales</taxon>
        <taxon>Burkholderiaceae</taxon>
        <taxon>Burkholderia</taxon>
        <taxon>pseudomallei group</taxon>
    </lineage>
</organism>
<dbReference type="EMBL" id="CP000124">
    <property type="protein sequence ID" value="ABA50996.1"/>
    <property type="molecule type" value="Genomic_DNA"/>
</dbReference>
<dbReference type="SMR" id="Q3JU77"/>
<dbReference type="EnsemblBacteria" id="ABA50996">
    <property type="protein sequence ID" value="ABA50996"/>
    <property type="gene ID" value="BURPS1710b_1467"/>
</dbReference>
<dbReference type="KEGG" id="bpm:BURPS1710b_1467"/>
<dbReference type="HOGENOM" id="CLU_061989_0_0_4"/>
<dbReference type="Proteomes" id="UP000002700">
    <property type="component" value="Chromosome I"/>
</dbReference>
<dbReference type="GO" id="GO:0005829">
    <property type="term" value="C:cytosol"/>
    <property type="evidence" value="ECO:0007669"/>
    <property type="project" value="TreeGrafter"/>
</dbReference>
<dbReference type="GO" id="GO:0033194">
    <property type="term" value="P:response to hydroperoxide"/>
    <property type="evidence" value="ECO:0007669"/>
    <property type="project" value="TreeGrafter"/>
</dbReference>
<dbReference type="HAMAP" id="MF_00652">
    <property type="entry name" value="UPF0246"/>
    <property type="match status" value="1"/>
</dbReference>
<dbReference type="InterPro" id="IPR005583">
    <property type="entry name" value="YaaA"/>
</dbReference>
<dbReference type="NCBIfam" id="NF002541">
    <property type="entry name" value="PRK02101.1-1"/>
    <property type="match status" value="1"/>
</dbReference>
<dbReference type="NCBIfam" id="NF002542">
    <property type="entry name" value="PRK02101.1-3"/>
    <property type="match status" value="1"/>
</dbReference>
<dbReference type="PANTHER" id="PTHR30283:SF4">
    <property type="entry name" value="PEROXIDE STRESS RESISTANCE PROTEIN YAAA"/>
    <property type="match status" value="1"/>
</dbReference>
<dbReference type="PANTHER" id="PTHR30283">
    <property type="entry name" value="PEROXIDE STRESS RESPONSE PROTEIN YAAA"/>
    <property type="match status" value="1"/>
</dbReference>
<dbReference type="Pfam" id="PF03883">
    <property type="entry name" value="H2O2_YaaD"/>
    <property type="match status" value="1"/>
</dbReference>
<evidence type="ECO:0000255" key="1">
    <source>
        <dbReference type="HAMAP-Rule" id="MF_00652"/>
    </source>
</evidence>
<comment type="similarity">
    <text evidence="1">Belongs to the UPF0246 family.</text>
</comment>
<gene>
    <name type="ordered locus">BURPS1710b_1467</name>
</gene>
<protein>
    <recommendedName>
        <fullName evidence="1">UPF0246 protein BURPS1710b_1467</fullName>
    </recommendedName>
</protein>